<accession>P9WHG9</accession>
<accession>L0TBP7</accession>
<accession>P66014</accession>
<accession>Q50638</accession>
<keyword id="KW-0002">3D-structure</keyword>
<keyword id="KW-0067">ATP-binding</keyword>
<keyword id="KW-0903">Direct protein sequencing</keyword>
<keyword id="KW-0342">GTP-binding</keyword>
<keyword id="KW-0378">Hydrolase</keyword>
<keyword id="KW-0418">Kinase</keyword>
<keyword id="KW-0460">Magnesium</keyword>
<keyword id="KW-0464">Manganese</keyword>
<keyword id="KW-0479">Metal-binding</keyword>
<keyword id="KW-0547">Nucleotide-binding</keyword>
<keyword id="KW-1185">Reference proteome</keyword>
<keyword id="KW-0808">Transferase</keyword>
<comment type="function">
    <text evidence="7 8">In eubacteria ppGpp (guanosine 3'-diphosphate 5'-diphosphate) is a mediator of the stringent response that coordinates a variety of cellular activities in response to changes in nutritional abundance. This enzyme catalyzes both the formation of pppGpp, which is then hydrolyzed to form ppGpp, as well as the hydrolysis of ppGpp. RelA is probably a key factor in the pathogenesis of M.tuberculosis as it regulates the intracellular concentrations of (p)ppGpp.</text>
</comment>
<comment type="catalytic activity">
    <reaction evidence="7">
        <text>guanosine 3',5'-bis(diphosphate) + H2O = GDP + diphosphate + H(+)</text>
        <dbReference type="Rhea" id="RHEA:14253"/>
        <dbReference type="ChEBI" id="CHEBI:15377"/>
        <dbReference type="ChEBI" id="CHEBI:15378"/>
        <dbReference type="ChEBI" id="CHEBI:33019"/>
        <dbReference type="ChEBI" id="CHEBI:58189"/>
        <dbReference type="ChEBI" id="CHEBI:77828"/>
        <dbReference type="EC" id="3.1.7.2"/>
    </reaction>
</comment>
<comment type="catalytic activity">
    <reaction evidence="7">
        <text>GTP + ATP = guanosine 3'-diphosphate 5'-triphosphate + AMP</text>
        <dbReference type="Rhea" id="RHEA:22088"/>
        <dbReference type="ChEBI" id="CHEBI:30616"/>
        <dbReference type="ChEBI" id="CHEBI:37565"/>
        <dbReference type="ChEBI" id="CHEBI:142410"/>
        <dbReference type="ChEBI" id="CHEBI:456215"/>
        <dbReference type="EC" id="2.7.6.5"/>
    </reaction>
</comment>
<comment type="cofactor">
    <cofactor evidence="12">
        <name>Mg(2+)</name>
        <dbReference type="ChEBI" id="CHEBI:18420"/>
    </cofactor>
    <text evidence="12">Binds 1 Mg(2+) ion per subunit.</text>
</comment>
<comment type="cofactor">
    <cofactor evidence="12">
        <name>Mn(2+)</name>
        <dbReference type="ChEBI" id="CHEBI:29035"/>
    </cofactor>
    <text evidence="12">Binds 1 Mn(2+) ion per subunit.</text>
</comment>
<comment type="activity regulation">
    <text evidence="9">Transferase activity occurs when RelA binds to a complex containing uncharged tRNA, ribosomes, and mRNA (RelA activating complex or RAC). The addition of charged tRNA to this complex has the opposite effect, inhibiting transferase activity and activating hydrolysis activity.</text>
</comment>
<comment type="biophysicochemical properties">
    <kinetics>
        <KM evidence="9">0.41 mM for ppGpp (at 30 degrees Celsius and pH 8)</KM>
        <KM evidence="9">0.48 mM for pppGpp (at 30 degrees Celsius and pH 8)</KM>
    </kinetics>
</comment>
<comment type="pathway">
    <text>Purine metabolism; ppGpp biosynthesis; ppGpp from GDP: step 1/1.</text>
</comment>
<comment type="pathway">
    <text>Purine metabolism; ppGpp biosynthesis; ppGpp from GTP: step 1/2.</text>
</comment>
<comment type="subunit">
    <text evidence="10">Homotrimer.</text>
</comment>
<comment type="induction">
    <text evidence="11">By MazG.</text>
</comment>
<comment type="domain">
    <text>Based on a mutagenesis study of the catalytic fragment (residues 1-394), the (p)ppGpp phosphohydrolase domain seems to encompass approximately the first 203 residues, while the (p)ppGpp synthase domain seems to be found between residues 87 and 394.</text>
</comment>
<comment type="disruption phenotype">
    <text evidence="8">Cells lacking this gene fail to synthesize ppGpp in response to starvation.</text>
</comment>
<comment type="similarity">
    <text evidence="12">Belongs to the RelA/SpoT family.</text>
</comment>
<comment type="sequence caution" evidence="12">
    <conflict type="erroneous initiation">
        <sequence resource="EMBL-CDS" id="CCP45379"/>
    </conflict>
    <text>Extended N-terminus.</text>
</comment>
<proteinExistence type="evidence at protein level"/>
<dbReference type="EC" id="2.7.6.5"/>
<dbReference type="EC" id="3.1.7.2"/>
<dbReference type="EMBL" id="AL123456">
    <property type="protein sequence ID" value="CCP45379.1"/>
    <property type="status" value="ALT_INIT"/>
    <property type="molecule type" value="Genomic_DNA"/>
</dbReference>
<dbReference type="PIR" id="F70725">
    <property type="entry name" value="F70725"/>
</dbReference>
<dbReference type="RefSeq" id="NP_217099.1">
    <property type="nucleotide sequence ID" value="NC_000962.3"/>
</dbReference>
<dbReference type="PDB" id="5XNX">
    <property type="method" value="X-ray"/>
    <property type="resolution" value="3.70 A"/>
    <property type="chains" value="A/B/C/D=1-394"/>
</dbReference>
<dbReference type="PDB" id="6LXG">
    <property type="method" value="NMR"/>
    <property type="chains" value="A/B=660-738"/>
</dbReference>
<dbReference type="PDB" id="7DOJ">
    <property type="method" value="NMR"/>
    <property type="chains" value="A=394-459"/>
</dbReference>
<dbReference type="PDBsum" id="5XNX"/>
<dbReference type="PDBsum" id="6LXG"/>
<dbReference type="PDBsum" id="7DOJ"/>
<dbReference type="SASBDB" id="P9WHG9"/>
<dbReference type="SMR" id="P9WHG9"/>
<dbReference type="FunCoup" id="P9WHG9">
    <property type="interactions" value="185"/>
</dbReference>
<dbReference type="STRING" id="83332.Rv2583c"/>
<dbReference type="PaxDb" id="83332-Rv2583c"/>
<dbReference type="DNASU" id="887888"/>
<dbReference type="GeneID" id="887888"/>
<dbReference type="KEGG" id="mtu:Rv2583c"/>
<dbReference type="TubercuList" id="Rv2583c"/>
<dbReference type="eggNOG" id="COG0317">
    <property type="taxonomic scope" value="Bacteria"/>
</dbReference>
<dbReference type="InParanoid" id="P9WHG9"/>
<dbReference type="OrthoDB" id="9805041at2"/>
<dbReference type="BRENDA" id="2.7.6.5">
    <property type="organism ID" value="3445"/>
</dbReference>
<dbReference type="SABIO-RK" id="P9WHG9"/>
<dbReference type="UniPathway" id="UPA00908">
    <property type="reaction ID" value="UER00884"/>
</dbReference>
<dbReference type="UniPathway" id="UPA00908">
    <property type="reaction ID" value="UER00886"/>
</dbReference>
<dbReference type="Proteomes" id="UP000001584">
    <property type="component" value="Chromosome"/>
</dbReference>
<dbReference type="GO" id="GO:0009274">
    <property type="term" value="C:peptidoglycan-based cell wall"/>
    <property type="evidence" value="ECO:0007005"/>
    <property type="project" value="UniProtKB"/>
</dbReference>
<dbReference type="GO" id="GO:0005886">
    <property type="term" value="C:plasma membrane"/>
    <property type="evidence" value="ECO:0007005"/>
    <property type="project" value="MTBBASE"/>
</dbReference>
<dbReference type="GO" id="GO:0005524">
    <property type="term" value="F:ATP binding"/>
    <property type="evidence" value="ECO:0007669"/>
    <property type="project" value="UniProtKB-KW"/>
</dbReference>
<dbReference type="GO" id="GO:0005525">
    <property type="term" value="F:GTP binding"/>
    <property type="evidence" value="ECO:0007669"/>
    <property type="project" value="UniProtKB-KW"/>
</dbReference>
<dbReference type="GO" id="GO:0008728">
    <property type="term" value="F:GTP diphosphokinase activity"/>
    <property type="evidence" value="ECO:0000314"/>
    <property type="project" value="MTBBASE"/>
</dbReference>
<dbReference type="GO" id="GO:0008893">
    <property type="term" value="F:guanosine-3',5'-bis(diphosphate) 3'-diphosphatase activity"/>
    <property type="evidence" value="ECO:0000314"/>
    <property type="project" value="MTBBASE"/>
</dbReference>
<dbReference type="GO" id="GO:0016301">
    <property type="term" value="F:kinase activity"/>
    <property type="evidence" value="ECO:0007669"/>
    <property type="project" value="UniProtKB-KW"/>
</dbReference>
<dbReference type="GO" id="GO:0030145">
    <property type="term" value="F:manganese ion binding"/>
    <property type="evidence" value="ECO:0000314"/>
    <property type="project" value="MTBBASE"/>
</dbReference>
<dbReference type="GO" id="GO:0015970">
    <property type="term" value="P:guanosine tetraphosphate biosynthetic process"/>
    <property type="evidence" value="ECO:0007669"/>
    <property type="project" value="UniProtKB-UniPathway"/>
</dbReference>
<dbReference type="GO" id="GO:0015968">
    <property type="term" value="P:stringent response"/>
    <property type="evidence" value="ECO:0000315"/>
    <property type="project" value="MTBBASE"/>
</dbReference>
<dbReference type="CDD" id="cd04876">
    <property type="entry name" value="ACT_RelA-SpoT"/>
    <property type="match status" value="1"/>
</dbReference>
<dbReference type="CDD" id="cd00077">
    <property type="entry name" value="HDc"/>
    <property type="match status" value="1"/>
</dbReference>
<dbReference type="CDD" id="cd05399">
    <property type="entry name" value="NT_Rel-Spo_like"/>
    <property type="match status" value="1"/>
</dbReference>
<dbReference type="CDD" id="cd01668">
    <property type="entry name" value="TGS_RSH"/>
    <property type="match status" value="1"/>
</dbReference>
<dbReference type="FunFam" id="3.10.20.30:FF:000002">
    <property type="entry name" value="GTP pyrophosphokinase (RelA/SpoT)"/>
    <property type="match status" value="1"/>
</dbReference>
<dbReference type="FunFam" id="1.10.3210.10:FF:000001">
    <property type="entry name" value="GTP pyrophosphokinase RelA"/>
    <property type="match status" value="1"/>
</dbReference>
<dbReference type="FunFam" id="3.30.460.10:FF:000001">
    <property type="entry name" value="GTP pyrophosphokinase RelA"/>
    <property type="match status" value="1"/>
</dbReference>
<dbReference type="FunFam" id="3.30.70.260:FF:000003">
    <property type="entry name" value="GTP pyrophosphokinase RelA"/>
    <property type="match status" value="1"/>
</dbReference>
<dbReference type="Gene3D" id="3.10.20.30">
    <property type="match status" value="1"/>
</dbReference>
<dbReference type="Gene3D" id="3.30.70.260">
    <property type="match status" value="1"/>
</dbReference>
<dbReference type="Gene3D" id="3.30.460.10">
    <property type="entry name" value="Beta Polymerase, domain 2"/>
    <property type="match status" value="1"/>
</dbReference>
<dbReference type="Gene3D" id="1.10.3210.10">
    <property type="entry name" value="Hypothetical protein af1432"/>
    <property type="match status" value="1"/>
</dbReference>
<dbReference type="InterPro" id="IPR045865">
    <property type="entry name" value="ACT-like_dom_sf"/>
</dbReference>
<dbReference type="InterPro" id="IPR002912">
    <property type="entry name" value="ACT_dom"/>
</dbReference>
<dbReference type="InterPro" id="IPR012675">
    <property type="entry name" value="Beta-grasp_dom_sf"/>
</dbReference>
<dbReference type="InterPro" id="IPR003607">
    <property type="entry name" value="HD/PDEase_dom"/>
</dbReference>
<dbReference type="InterPro" id="IPR006674">
    <property type="entry name" value="HD_domain"/>
</dbReference>
<dbReference type="InterPro" id="IPR043519">
    <property type="entry name" value="NT_sf"/>
</dbReference>
<dbReference type="InterPro" id="IPR004811">
    <property type="entry name" value="RelA/Spo_fam"/>
</dbReference>
<dbReference type="InterPro" id="IPR045600">
    <property type="entry name" value="RelA/SpoT_AH_RIS"/>
</dbReference>
<dbReference type="InterPro" id="IPR007685">
    <property type="entry name" value="RelA_SpoT"/>
</dbReference>
<dbReference type="InterPro" id="IPR004095">
    <property type="entry name" value="TGS"/>
</dbReference>
<dbReference type="InterPro" id="IPR012676">
    <property type="entry name" value="TGS-like"/>
</dbReference>
<dbReference type="InterPro" id="IPR033655">
    <property type="entry name" value="TGS_RelA/SpoT"/>
</dbReference>
<dbReference type="NCBIfam" id="TIGR00691">
    <property type="entry name" value="spoT_relA"/>
    <property type="match status" value="1"/>
</dbReference>
<dbReference type="PANTHER" id="PTHR21262:SF31">
    <property type="entry name" value="GTP PYROPHOSPHOKINASE"/>
    <property type="match status" value="1"/>
</dbReference>
<dbReference type="PANTHER" id="PTHR21262">
    <property type="entry name" value="GUANOSINE-3',5'-BIS DIPHOSPHATE 3'-PYROPHOSPHOHYDROLASE"/>
    <property type="match status" value="1"/>
</dbReference>
<dbReference type="Pfam" id="PF13291">
    <property type="entry name" value="ACT_4"/>
    <property type="match status" value="1"/>
</dbReference>
<dbReference type="Pfam" id="PF13328">
    <property type="entry name" value="HD_4"/>
    <property type="match status" value="1"/>
</dbReference>
<dbReference type="Pfam" id="PF19296">
    <property type="entry name" value="RelA_AH_RIS"/>
    <property type="match status" value="1"/>
</dbReference>
<dbReference type="Pfam" id="PF04607">
    <property type="entry name" value="RelA_SpoT"/>
    <property type="match status" value="1"/>
</dbReference>
<dbReference type="Pfam" id="PF02824">
    <property type="entry name" value="TGS"/>
    <property type="match status" value="1"/>
</dbReference>
<dbReference type="SMART" id="SM00471">
    <property type="entry name" value="HDc"/>
    <property type="match status" value="1"/>
</dbReference>
<dbReference type="SMART" id="SM00954">
    <property type="entry name" value="RelA_SpoT"/>
    <property type="match status" value="1"/>
</dbReference>
<dbReference type="SUPFAM" id="SSF55021">
    <property type="entry name" value="ACT-like"/>
    <property type="match status" value="1"/>
</dbReference>
<dbReference type="SUPFAM" id="SSF109604">
    <property type="entry name" value="HD-domain/PDEase-like"/>
    <property type="match status" value="1"/>
</dbReference>
<dbReference type="SUPFAM" id="SSF81301">
    <property type="entry name" value="Nucleotidyltransferase"/>
    <property type="match status" value="1"/>
</dbReference>
<dbReference type="SUPFAM" id="SSF81271">
    <property type="entry name" value="TGS-like"/>
    <property type="match status" value="1"/>
</dbReference>
<dbReference type="PROSITE" id="PS51671">
    <property type="entry name" value="ACT"/>
    <property type="match status" value="1"/>
</dbReference>
<dbReference type="PROSITE" id="PS51831">
    <property type="entry name" value="HD"/>
    <property type="match status" value="1"/>
</dbReference>
<dbReference type="PROSITE" id="PS51880">
    <property type="entry name" value="TGS"/>
    <property type="match status" value="1"/>
</dbReference>
<gene>
    <name type="primary">relA</name>
    <name type="ordered locus">Rv2583c</name>
    <name type="ORF">MTCY227.18</name>
</gene>
<organism>
    <name type="scientific">Mycobacterium tuberculosis (strain ATCC 25618 / H37Rv)</name>
    <dbReference type="NCBI Taxonomy" id="83332"/>
    <lineage>
        <taxon>Bacteria</taxon>
        <taxon>Bacillati</taxon>
        <taxon>Actinomycetota</taxon>
        <taxon>Actinomycetes</taxon>
        <taxon>Mycobacteriales</taxon>
        <taxon>Mycobacteriaceae</taxon>
        <taxon>Mycobacterium</taxon>
        <taxon>Mycobacterium tuberculosis complex</taxon>
    </lineage>
</organism>
<protein>
    <recommendedName>
        <fullName>Bifunctional (p)ppGpp synthase/hydrolase RelA</fullName>
    </recommendedName>
    <domain>
        <recommendedName>
            <fullName>GTP pyrophosphokinase</fullName>
            <ecNumber>2.7.6.5</ecNumber>
        </recommendedName>
        <alternativeName>
            <fullName>(p)ppGpp synthase</fullName>
        </alternativeName>
        <alternativeName>
            <fullName>ATP:GTP 3'-pyrophosphotransferase</fullName>
        </alternativeName>
        <alternativeName>
            <fullName>Stringent response-like protein</fullName>
        </alternativeName>
        <alternativeName>
            <fullName>ppGpp synthase II</fullName>
        </alternativeName>
    </domain>
    <domain>
        <recommendedName>
            <fullName>Guanosine-3',5'-bis(diphosphate) 3'-pyrophosphohydrolase</fullName>
            <ecNumber>3.1.7.2</ecNumber>
        </recommendedName>
        <alternativeName>
            <fullName>Penta-phosphate guanosine-3'-pyrophosphohydrolase</fullName>
            <shortName>(ppGpp)ase</shortName>
        </alternativeName>
    </domain>
</protein>
<evidence type="ECO:0000250" key="1"/>
<evidence type="ECO:0000255" key="2"/>
<evidence type="ECO:0000255" key="3">
    <source>
        <dbReference type="PROSITE-ProRule" id="PRU01007"/>
    </source>
</evidence>
<evidence type="ECO:0000255" key="4">
    <source>
        <dbReference type="PROSITE-ProRule" id="PRU01175"/>
    </source>
</evidence>
<evidence type="ECO:0000255" key="5">
    <source>
        <dbReference type="PROSITE-ProRule" id="PRU01228"/>
    </source>
</evidence>
<evidence type="ECO:0000256" key="6">
    <source>
        <dbReference type="SAM" id="MobiDB-lite"/>
    </source>
</evidence>
<evidence type="ECO:0000269" key="7">
    <source>
    </source>
</evidence>
<evidence type="ECO:0000269" key="8">
    <source>
    </source>
</evidence>
<evidence type="ECO:0000269" key="9">
    <source>
    </source>
</evidence>
<evidence type="ECO:0000269" key="10">
    <source>
    </source>
</evidence>
<evidence type="ECO:0000269" key="11">
    <source>
    </source>
</evidence>
<evidence type="ECO:0000305" key="12"/>
<evidence type="ECO:0007829" key="13">
    <source>
        <dbReference type="PDB" id="6LXG"/>
    </source>
</evidence>
<evidence type="ECO:0007829" key="14">
    <source>
        <dbReference type="PDB" id="7DOJ"/>
    </source>
</evidence>
<reference key="1">
    <citation type="journal article" date="1998" name="Nature">
        <title>Deciphering the biology of Mycobacterium tuberculosis from the complete genome sequence.</title>
        <authorList>
            <person name="Cole S.T."/>
            <person name="Brosch R."/>
            <person name="Parkhill J."/>
            <person name="Garnier T."/>
            <person name="Churcher C.M."/>
            <person name="Harris D.E."/>
            <person name="Gordon S.V."/>
            <person name="Eiglmeier K."/>
            <person name="Gas S."/>
            <person name="Barry C.E. III"/>
            <person name="Tekaia F."/>
            <person name="Badcock K."/>
            <person name="Basham D."/>
            <person name="Brown D."/>
            <person name="Chillingworth T."/>
            <person name="Connor R."/>
            <person name="Davies R.M."/>
            <person name="Devlin K."/>
            <person name="Feltwell T."/>
            <person name="Gentles S."/>
            <person name="Hamlin N."/>
            <person name="Holroyd S."/>
            <person name="Hornsby T."/>
            <person name="Jagels K."/>
            <person name="Krogh A."/>
            <person name="McLean J."/>
            <person name="Moule S."/>
            <person name="Murphy L.D."/>
            <person name="Oliver S."/>
            <person name="Osborne J."/>
            <person name="Quail M.A."/>
            <person name="Rajandream M.A."/>
            <person name="Rogers J."/>
            <person name="Rutter S."/>
            <person name="Seeger K."/>
            <person name="Skelton S."/>
            <person name="Squares S."/>
            <person name="Squares R."/>
            <person name="Sulston J.E."/>
            <person name="Taylor K."/>
            <person name="Whitehead S."/>
            <person name="Barrell B.G."/>
        </authorList>
    </citation>
    <scope>NUCLEOTIDE SEQUENCE [LARGE SCALE GENOMIC DNA]</scope>
    <source>
        <strain>ATCC 25618 / H37Rv</strain>
    </source>
</reference>
<reference key="2">
    <citation type="journal article" date="1999" name="Gene">
        <title>Cloning and characterization of a bifunctional RelA/SpoT homologue from Mycobacterium tuberculosis.</title>
        <authorList>
            <person name="Avarbock D."/>
            <person name="Salem J."/>
            <person name="Li L.S."/>
            <person name="Wang Z.M."/>
            <person name="Rubin H."/>
        </authorList>
    </citation>
    <scope>PROTEIN SEQUENCE OF 306-329</scope>
    <scope>FUNCTION AS A PYROPHOSPHORYLTRANSFERASE AND PYROPHOSPHOHYDROLASE</scope>
    <scope>CATALYTIC ACTIVITY</scope>
    <scope>COFACTOR</scope>
</reference>
<reference key="3">
    <citation type="journal article" date="2000" name="Biochemistry">
        <title>Differential regulation of opposing RelMtb activities by the aminoacylation state of a tRNA.ribosome.mRNA.RelMtb complex.</title>
        <authorList>
            <person name="Avarbock D."/>
            <person name="Avarbock A."/>
            <person name="Rubin H."/>
        </authorList>
    </citation>
    <scope>ACTIVITY REGULATION</scope>
    <scope>BIOPHYSICOCHEMICAL PROPERTIES</scope>
</reference>
<reference key="4">
    <citation type="journal article" date="2000" name="J. Bacteriol.">
        <title>The stringent response of Mycobacterium tuberculosis is required for long-term survival.</title>
        <authorList>
            <person name="Primm T.P."/>
            <person name="Andersen S.J."/>
            <person name="Mizrahi V."/>
            <person name="Avarbock D."/>
            <person name="Rubin H."/>
            <person name="Barry C.E. III"/>
        </authorList>
    </citation>
    <scope>FUNCTION IN REGULATION OF STRINGENT RESPONSE</scope>
    <scope>DISRUPTION PHENOTYPE</scope>
</reference>
<reference key="5">
    <citation type="journal article" date="2005" name="Biochemistry">
        <title>Functional regulation of the opposing (p)ppGpp synthetase/hydrolase activities of RelMtb from Mycobacterium tuberculosis.</title>
        <authorList>
            <person name="Avarbock A."/>
            <person name="Avarbock D."/>
            <person name="Teh J.S."/>
            <person name="Buckstein M."/>
            <person name="Wang Z.M."/>
            <person name="Rubin H."/>
        </authorList>
    </citation>
    <scope>MUTAGENESIS OF HIS-80; ASP-81; GLY-241; HIS-344; ASP-632 AND CYS-633</scope>
    <scope>SUBUNIT</scope>
</reference>
<reference key="6">
    <citation type="journal article" date="2010" name="J. Biol. Chem.">
        <title>Mycobacterial MazG is a novel NTP pyrophosphohydrolase involved in oxidative stress response.</title>
        <authorList>
            <person name="Lu L.D."/>
            <person name="Sun Q."/>
            <person name="Fan X.Y."/>
            <person name="Zhong Y."/>
            <person name="Yao Y.F."/>
            <person name="Zhao G.P."/>
        </authorList>
    </citation>
    <scope>INDUCTION</scope>
    <source>
        <strain>ATCC 25618 / H37Rv</strain>
    </source>
</reference>
<reference key="7">
    <citation type="journal article" date="2011" name="Mol. Cell. Proteomics">
        <title>Proteogenomic analysis of Mycobacterium tuberculosis by high resolution mass spectrometry.</title>
        <authorList>
            <person name="Kelkar D.S."/>
            <person name="Kumar D."/>
            <person name="Kumar P."/>
            <person name="Balakrishnan L."/>
            <person name="Muthusamy B."/>
            <person name="Yadav A.K."/>
            <person name="Shrivastava P."/>
            <person name="Marimuthu A."/>
            <person name="Anand S."/>
            <person name="Sundaram H."/>
            <person name="Kingsbury R."/>
            <person name="Harsha H.C."/>
            <person name="Nair B."/>
            <person name="Prasad T.S."/>
            <person name="Chauhan D.S."/>
            <person name="Katoch K."/>
            <person name="Katoch V.M."/>
            <person name="Kumar P."/>
            <person name="Chaerkady R."/>
            <person name="Ramachandran S."/>
            <person name="Dash D."/>
            <person name="Pandey A."/>
        </authorList>
    </citation>
    <scope>IDENTIFICATION BY MASS SPECTROMETRY [LARGE SCALE ANALYSIS]</scope>
    <source>
        <strain>ATCC 25618 / H37Rv</strain>
    </source>
</reference>
<feature type="chain" id="PRO_0000166551" description="Bifunctional (p)ppGpp synthase/hydrolase RelA">
    <location>
        <begin position="1"/>
        <end position="738"/>
    </location>
</feature>
<feature type="domain" description="HD" evidence="4">
    <location>
        <begin position="53"/>
        <end position="150"/>
    </location>
</feature>
<feature type="domain" description="TGS" evidence="5">
    <location>
        <begin position="398"/>
        <end position="459"/>
    </location>
</feature>
<feature type="domain" description="ACT" evidence="3">
    <location>
        <begin position="662"/>
        <end position="736"/>
    </location>
</feature>
<feature type="region of interest" description="Disordered" evidence="6">
    <location>
        <begin position="568"/>
        <end position="592"/>
    </location>
</feature>
<feature type="active site" description="Nucleophile, for hydrolase activity" evidence="2">
    <location>
        <position position="84"/>
    </location>
</feature>
<feature type="active site" description="Nucleophile, for hydrolase activity" evidence="2">
    <location>
        <position position="85"/>
    </location>
</feature>
<feature type="binding site" evidence="2">
    <location>
        <position position="56"/>
    </location>
    <ligand>
        <name>Mn(2+)</name>
        <dbReference type="ChEBI" id="CHEBI:29035"/>
    </ligand>
</feature>
<feature type="binding site" evidence="2">
    <location>
        <position position="80"/>
    </location>
    <ligand>
        <name>Mn(2+)</name>
        <dbReference type="ChEBI" id="CHEBI:29035"/>
    </ligand>
</feature>
<feature type="binding site" evidence="2">
    <location>
        <position position="145"/>
    </location>
    <ligand>
        <name>Mn(2+)</name>
        <dbReference type="ChEBI" id="CHEBI:29035"/>
    </ligand>
</feature>
<feature type="binding site" evidence="1">
    <location>
        <position position="265"/>
    </location>
    <ligand>
        <name>Mg(2+)</name>
        <dbReference type="ChEBI" id="CHEBI:18420"/>
    </ligand>
</feature>
<feature type="mutagenesis site" description="Loss of hydrolytic activity." evidence="10">
    <original>H</original>
    <variation>D</variation>
    <location>
        <position position="80"/>
    </location>
</feature>
<feature type="mutagenesis site" description="Loss of hydrolytic activity." evidence="10">
    <original>D</original>
    <variation>A</variation>
    <location>
        <position position="81"/>
    </location>
</feature>
<feature type="mutagenesis site" description="Loss of ppGpp synthase activity." evidence="10">
    <original>G</original>
    <variation>E</variation>
    <location>
        <position position="241"/>
    </location>
</feature>
<feature type="mutagenesis site" description="Loss of ppGpp synthase activity." evidence="10">
    <original>H</original>
    <variation>Y</variation>
    <location>
        <position position="344"/>
    </location>
</feature>
<feature type="mutagenesis site" description="Altered association with RAC components." evidence="10">
    <original>D</original>
    <variation>A</variation>
    <location>
        <position position="632"/>
    </location>
</feature>
<feature type="mutagenesis site" description="Altered association with RAC components." evidence="10">
    <original>C</original>
    <variation>A</variation>
    <location>
        <position position="633"/>
    </location>
</feature>
<feature type="strand" evidence="14">
    <location>
        <begin position="399"/>
        <end position="403"/>
    </location>
</feature>
<feature type="strand" evidence="14">
    <location>
        <begin position="409"/>
        <end position="413"/>
    </location>
</feature>
<feature type="helix" evidence="14">
    <location>
        <begin position="418"/>
        <end position="425"/>
    </location>
</feature>
<feature type="helix" evidence="14">
    <location>
        <begin position="427"/>
        <end position="431"/>
    </location>
</feature>
<feature type="strand" evidence="14">
    <location>
        <begin position="435"/>
        <end position="438"/>
    </location>
</feature>
<feature type="strand" evidence="14">
    <location>
        <begin position="441"/>
        <end position="443"/>
    </location>
</feature>
<feature type="strand" evidence="14">
    <location>
        <begin position="451"/>
        <end position="458"/>
    </location>
</feature>
<feature type="strand" evidence="13">
    <location>
        <begin position="662"/>
        <end position="667"/>
    </location>
</feature>
<feature type="helix" evidence="13">
    <location>
        <begin position="671"/>
        <end position="683"/>
    </location>
</feature>
<feature type="strand" evidence="13">
    <location>
        <begin position="688"/>
        <end position="699"/>
    </location>
</feature>
<feature type="strand" evidence="13">
    <location>
        <begin position="701"/>
        <end position="707"/>
    </location>
</feature>
<feature type="helix" evidence="13">
    <location>
        <begin position="712"/>
        <end position="723"/>
    </location>
</feature>
<feature type="strand" evidence="13">
    <location>
        <begin position="728"/>
        <end position="734"/>
    </location>
</feature>
<name>RELA_MYCTU</name>
<sequence length="738" mass="81827">MTAQRSTTNPVLEPLVAVHREIYPKADLSILQRAYEVADQRHASQLRQSGDPYITHPLAVANILAELGMDTTTLVAALLHDTVEDTGYTLEALTEEFGEEVGHLVDGVTKLDRVVLGSAAEGETIRKMITAMARDPRVLVIKVADRLHNMRTMRFLPPEKQARKARETLEVIAPLAHRLGMASVKWELEDLSFAILHPKKYEEIVRLVAGRAPSRDTYLAKVRAEIVNTLTASKIKATVEGRPKHYWSIYQKMIVKGRDFDDIHDLVGVRILCDEIRDCYAAVGVVHSLWQPMAGRFKDYIAQPRYGVYQSLHTTVVGPEGKPLEVQIRTRDMHRTAEYGIAAHWRYKEAKGRNGVLHPHAAAEIDDMAWMRQLLDWQREAADPGEFLESLRYDLAVQEIFVFTPKGDVITLPTGSTPVDFAYAVHTEVGHRCIGARVNGRLVALERKLENGEVVEVFTSKAPNAGPSRDWQQFVVSPRAKTKIRQWFAKERREEALETGKDAMAREVRRGGLPLQRLVNGESMAAVARELHYADVSALYTAIGEGHVSAKHVVQRLLAELGGIDQAEEELAERSTPATMPRRPRSTDDVGVSVPGAPGVLTKLAKCCTPVPGDVIMGFVTRGGGVSVHRTDCTNAASLQQQAERIIEVLWAPSPSSVFLVAIQVEALDRHRLLSDVTRALADEKVNILSASVTTSGDRVAISRFTFEMGDPKHLGHLLNAVRNVEGVYDVYRVTSAA</sequence>